<accession>Q7U646</accession>
<sequence length="775" mass="88837">MGGAAVLDWMVQDGERLANCRHDHPLAILGPQPSDAGWTVRVWMPEAHSVTLLEGGREALMTAPNHPWVFETTLSHDPGSNYKVRVERGGITHEQHDPWAFRDEWMGDMDRHLFAQGNHHHIWQRMGAHLTQRDGISGVMFCLWAPHALSVSILGDLNSWDGRHHPMQQRLGGIWELFIPGLAEGSLYKYEIRTQDGHCYQKADPYGFQHEVRPDNSSVVARLDGFQWSDGSWMQRRDSSNPLEQPISVYEMHLGSWIHASAEEPWIQPDGSPRAPVPAADMKPGARLLTYAELAARLIPYVKERGFTHIELMPITEHPFDGSWGYQVTGWYAPTSRYGTPDEFRAFVDRCHAEGIGVIIDWVPGHFPKDAHGLAFFDGTHLYEHGDPRIGEHKEWGTLIFNYSRNEVRNFLVANLVFWFEQFHIDGIRVDAVASMLYRDYLRPDGEWLANEHGGRENTEAVQFLQQANHVLFQHFPGALSIAEESTTWPMVTQPTEIGGLGFNLKWNMGWMHDMLDYFELDPWFRQFHQNNITFSIWYTYTENFMLALSHDEVVHGKSHLLHKMPGDDWQKYANTRALLAYMWTHPGKKTIFMGMEFGQRAEWNVWGDLQWDLLNYEPHKGIQLLVDDLNTLYKAEPALWRDDFDQFGFQWIDCNDNRHSVISFMRRESSSGTWLVVVANFTPQSHSHYRVGVPLAGFYEEIFNTDAARYGGSNLGNMGGKPTDEWSIHGYENSLDLCLPPLSLLVFRHDPKRSLQAASASACDKADDETADTN</sequence>
<gene>
    <name evidence="1" type="primary">glgB</name>
    <name type="ordered locus">SYNW1494</name>
</gene>
<protein>
    <recommendedName>
        <fullName evidence="1">1,4-alpha-glucan branching enzyme GlgB</fullName>
        <ecNumber evidence="1">2.4.1.18</ecNumber>
    </recommendedName>
    <alternativeName>
        <fullName evidence="1">1,4-alpha-D-glucan:1,4-alpha-D-glucan 6-glucosyl-transferase</fullName>
    </alternativeName>
    <alternativeName>
        <fullName evidence="1">Alpha-(1-&gt;4)-glucan branching enzyme</fullName>
    </alternativeName>
    <alternativeName>
        <fullName evidence="1">Glycogen branching enzyme</fullName>
        <shortName evidence="1">BE</shortName>
    </alternativeName>
</protein>
<proteinExistence type="inferred from homology"/>
<reference key="1">
    <citation type="journal article" date="2003" name="Nature">
        <title>The genome of a motile marine Synechococcus.</title>
        <authorList>
            <person name="Palenik B."/>
            <person name="Brahamsha B."/>
            <person name="Larimer F.W."/>
            <person name="Land M.L."/>
            <person name="Hauser L."/>
            <person name="Chain P."/>
            <person name="Lamerdin J.E."/>
            <person name="Regala W."/>
            <person name="Allen E.E."/>
            <person name="McCarren J."/>
            <person name="Paulsen I.T."/>
            <person name="Dufresne A."/>
            <person name="Partensky F."/>
            <person name="Webb E.A."/>
            <person name="Waterbury J."/>
        </authorList>
    </citation>
    <scope>NUCLEOTIDE SEQUENCE [LARGE SCALE GENOMIC DNA]</scope>
    <source>
        <strain>WH8102</strain>
    </source>
</reference>
<evidence type="ECO:0000255" key="1">
    <source>
        <dbReference type="HAMAP-Rule" id="MF_00685"/>
    </source>
</evidence>
<dbReference type="EC" id="2.4.1.18" evidence="1"/>
<dbReference type="EMBL" id="BX569693">
    <property type="protein sequence ID" value="CAE08009.1"/>
    <property type="molecule type" value="Genomic_DNA"/>
</dbReference>
<dbReference type="RefSeq" id="WP_011128358.1">
    <property type="nucleotide sequence ID" value="NC_005070.1"/>
</dbReference>
<dbReference type="SMR" id="Q7U646"/>
<dbReference type="STRING" id="84588.SYNW1494"/>
<dbReference type="CAZy" id="CBM48">
    <property type="family name" value="Carbohydrate-Binding Module Family 48"/>
</dbReference>
<dbReference type="CAZy" id="GH13">
    <property type="family name" value="Glycoside Hydrolase Family 13"/>
</dbReference>
<dbReference type="KEGG" id="syw:SYNW1494"/>
<dbReference type="eggNOG" id="COG0296">
    <property type="taxonomic scope" value="Bacteria"/>
</dbReference>
<dbReference type="HOGENOM" id="CLU_004245_3_2_3"/>
<dbReference type="UniPathway" id="UPA00164"/>
<dbReference type="Proteomes" id="UP000001422">
    <property type="component" value="Chromosome"/>
</dbReference>
<dbReference type="GO" id="GO:0005829">
    <property type="term" value="C:cytosol"/>
    <property type="evidence" value="ECO:0007669"/>
    <property type="project" value="TreeGrafter"/>
</dbReference>
<dbReference type="GO" id="GO:0003844">
    <property type="term" value="F:1,4-alpha-glucan branching enzyme activity"/>
    <property type="evidence" value="ECO:0007669"/>
    <property type="project" value="UniProtKB-UniRule"/>
</dbReference>
<dbReference type="GO" id="GO:0043169">
    <property type="term" value="F:cation binding"/>
    <property type="evidence" value="ECO:0007669"/>
    <property type="project" value="InterPro"/>
</dbReference>
<dbReference type="GO" id="GO:0004553">
    <property type="term" value="F:hydrolase activity, hydrolyzing O-glycosyl compounds"/>
    <property type="evidence" value="ECO:0007669"/>
    <property type="project" value="InterPro"/>
</dbReference>
<dbReference type="GO" id="GO:0005978">
    <property type="term" value="P:glycogen biosynthetic process"/>
    <property type="evidence" value="ECO:0007669"/>
    <property type="project" value="UniProtKB-UniRule"/>
</dbReference>
<dbReference type="CDD" id="cd11322">
    <property type="entry name" value="AmyAc_Glg_BE"/>
    <property type="match status" value="1"/>
</dbReference>
<dbReference type="CDD" id="cd02855">
    <property type="entry name" value="E_set_GBE_prok_N"/>
    <property type="match status" value="1"/>
</dbReference>
<dbReference type="FunFam" id="2.60.40.10:FF:000169">
    <property type="entry name" value="1,4-alpha-glucan branching enzyme GlgB"/>
    <property type="match status" value="1"/>
</dbReference>
<dbReference type="FunFam" id="2.60.40.1180:FF:000002">
    <property type="entry name" value="1,4-alpha-glucan branching enzyme GlgB"/>
    <property type="match status" value="1"/>
</dbReference>
<dbReference type="FunFam" id="3.20.20.80:FF:000003">
    <property type="entry name" value="1,4-alpha-glucan branching enzyme GlgB"/>
    <property type="match status" value="1"/>
</dbReference>
<dbReference type="Gene3D" id="3.20.20.80">
    <property type="entry name" value="Glycosidases"/>
    <property type="match status" value="1"/>
</dbReference>
<dbReference type="Gene3D" id="2.60.40.1180">
    <property type="entry name" value="Golgi alpha-mannosidase II"/>
    <property type="match status" value="1"/>
</dbReference>
<dbReference type="Gene3D" id="2.60.40.10">
    <property type="entry name" value="Immunoglobulins"/>
    <property type="match status" value="2"/>
</dbReference>
<dbReference type="HAMAP" id="MF_00685">
    <property type="entry name" value="GlgB"/>
    <property type="match status" value="1"/>
</dbReference>
<dbReference type="InterPro" id="IPR006048">
    <property type="entry name" value="A-amylase/branching_C"/>
</dbReference>
<dbReference type="InterPro" id="IPR037439">
    <property type="entry name" value="Branching_enzy"/>
</dbReference>
<dbReference type="InterPro" id="IPR006407">
    <property type="entry name" value="GlgB"/>
</dbReference>
<dbReference type="InterPro" id="IPR054169">
    <property type="entry name" value="GlgB_N"/>
</dbReference>
<dbReference type="InterPro" id="IPR044143">
    <property type="entry name" value="GlgB_N_E_set_prok"/>
</dbReference>
<dbReference type="InterPro" id="IPR006047">
    <property type="entry name" value="Glyco_hydro_13_cat_dom"/>
</dbReference>
<dbReference type="InterPro" id="IPR004193">
    <property type="entry name" value="Glyco_hydro_13_N"/>
</dbReference>
<dbReference type="InterPro" id="IPR013780">
    <property type="entry name" value="Glyco_hydro_b"/>
</dbReference>
<dbReference type="InterPro" id="IPR017853">
    <property type="entry name" value="Glycoside_hydrolase_SF"/>
</dbReference>
<dbReference type="InterPro" id="IPR013783">
    <property type="entry name" value="Ig-like_fold"/>
</dbReference>
<dbReference type="InterPro" id="IPR014756">
    <property type="entry name" value="Ig_E-set"/>
</dbReference>
<dbReference type="NCBIfam" id="TIGR01515">
    <property type="entry name" value="branching_enzym"/>
    <property type="match status" value="1"/>
</dbReference>
<dbReference type="NCBIfam" id="NF003811">
    <property type="entry name" value="PRK05402.1"/>
    <property type="match status" value="1"/>
</dbReference>
<dbReference type="NCBIfam" id="NF008967">
    <property type="entry name" value="PRK12313.1"/>
    <property type="match status" value="1"/>
</dbReference>
<dbReference type="PANTHER" id="PTHR43651">
    <property type="entry name" value="1,4-ALPHA-GLUCAN-BRANCHING ENZYME"/>
    <property type="match status" value="1"/>
</dbReference>
<dbReference type="PANTHER" id="PTHR43651:SF3">
    <property type="entry name" value="1,4-ALPHA-GLUCAN-BRANCHING ENZYME"/>
    <property type="match status" value="1"/>
</dbReference>
<dbReference type="Pfam" id="PF00128">
    <property type="entry name" value="Alpha-amylase"/>
    <property type="match status" value="2"/>
</dbReference>
<dbReference type="Pfam" id="PF02806">
    <property type="entry name" value="Alpha-amylase_C"/>
    <property type="match status" value="1"/>
</dbReference>
<dbReference type="Pfam" id="PF02922">
    <property type="entry name" value="CBM_48"/>
    <property type="match status" value="1"/>
</dbReference>
<dbReference type="Pfam" id="PF22019">
    <property type="entry name" value="GlgB_N"/>
    <property type="match status" value="1"/>
</dbReference>
<dbReference type="PIRSF" id="PIRSF000463">
    <property type="entry name" value="GlgB"/>
    <property type="match status" value="1"/>
</dbReference>
<dbReference type="SMART" id="SM00642">
    <property type="entry name" value="Aamy"/>
    <property type="match status" value="1"/>
</dbReference>
<dbReference type="SUPFAM" id="SSF51445">
    <property type="entry name" value="(Trans)glycosidases"/>
    <property type="match status" value="1"/>
</dbReference>
<dbReference type="SUPFAM" id="SSF81296">
    <property type="entry name" value="E set domains"/>
    <property type="match status" value="2"/>
</dbReference>
<dbReference type="SUPFAM" id="SSF51011">
    <property type="entry name" value="Glycosyl hydrolase domain"/>
    <property type="match status" value="1"/>
</dbReference>
<feature type="chain" id="PRO_0000188757" description="1,4-alpha-glucan branching enzyme GlgB">
    <location>
        <begin position="1"/>
        <end position="775"/>
    </location>
</feature>
<feature type="active site" description="Nucleophile" evidence="1">
    <location>
        <position position="431"/>
    </location>
</feature>
<feature type="active site" description="Proton donor" evidence="1">
    <location>
        <position position="484"/>
    </location>
</feature>
<name>GLGB_PARMW</name>
<keyword id="KW-0119">Carbohydrate metabolism</keyword>
<keyword id="KW-0320">Glycogen biosynthesis</keyword>
<keyword id="KW-0321">Glycogen metabolism</keyword>
<keyword id="KW-0328">Glycosyltransferase</keyword>
<keyword id="KW-0808">Transferase</keyword>
<organism>
    <name type="scientific">Parasynechococcus marenigrum (strain WH8102)</name>
    <dbReference type="NCBI Taxonomy" id="84588"/>
    <lineage>
        <taxon>Bacteria</taxon>
        <taxon>Bacillati</taxon>
        <taxon>Cyanobacteriota</taxon>
        <taxon>Cyanophyceae</taxon>
        <taxon>Synechococcales</taxon>
        <taxon>Prochlorococcaceae</taxon>
        <taxon>Parasynechococcus</taxon>
        <taxon>Parasynechococcus marenigrum</taxon>
    </lineage>
</organism>
<comment type="function">
    <text evidence="1">Catalyzes the formation of the alpha-1,6-glucosidic linkages in glycogen by scission of a 1,4-alpha-linked oligosaccharide from growing alpha-1,4-glucan chains and the subsequent attachment of the oligosaccharide to the alpha-1,6 position.</text>
</comment>
<comment type="catalytic activity">
    <reaction evidence="1">
        <text>Transfers a segment of a (1-&gt;4)-alpha-D-glucan chain to a primary hydroxy group in a similar glucan chain.</text>
        <dbReference type="EC" id="2.4.1.18"/>
    </reaction>
</comment>
<comment type="pathway">
    <text evidence="1">Glycan biosynthesis; glycogen biosynthesis.</text>
</comment>
<comment type="subunit">
    <text evidence="1">Monomer.</text>
</comment>
<comment type="similarity">
    <text evidence="1">Belongs to the glycosyl hydrolase 13 family. GlgB subfamily.</text>
</comment>